<dbReference type="GO" id="GO:0005576">
    <property type="term" value="C:extracellular region"/>
    <property type="evidence" value="ECO:0007669"/>
    <property type="project" value="UniProtKB-SubCell"/>
</dbReference>
<dbReference type="GO" id="GO:0016020">
    <property type="term" value="C:membrane"/>
    <property type="evidence" value="ECO:0007669"/>
    <property type="project" value="UniProtKB-KW"/>
</dbReference>
<dbReference type="GO" id="GO:0044218">
    <property type="term" value="C:other organism cell membrane"/>
    <property type="evidence" value="ECO:0007669"/>
    <property type="project" value="UniProtKB-KW"/>
</dbReference>
<dbReference type="GO" id="GO:0042742">
    <property type="term" value="P:defense response to bacterium"/>
    <property type="evidence" value="ECO:0007669"/>
    <property type="project" value="UniProtKB-KW"/>
</dbReference>
<dbReference type="GO" id="GO:0045087">
    <property type="term" value="P:innate immune response"/>
    <property type="evidence" value="ECO:0007669"/>
    <property type="project" value="UniProtKB-KW"/>
</dbReference>
<dbReference type="InterPro" id="IPR013213">
    <property type="entry name" value="Mastoparan"/>
</dbReference>
<dbReference type="Pfam" id="PF08249">
    <property type="entry name" value="Mastoparan"/>
    <property type="match status" value="1"/>
</dbReference>
<feature type="propeptide" id="PRO_0000458822" evidence="4">
    <location>
        <begin position="1" status="less than"/>
        <end position="22"/>
    </location>
</feature>
<feature type="peptide" id="PRO_0000247266" description="Mastoparan-VT" evidence="1">
    <location>
        <begin position="23"/>
        <end position="36"/>
    </location>
</feature>
<feature type="repeat" description="AXPX 1" evidence="3">
    <location>
        <begin position="4"/>
        <end position="7"/>
    </location>
</feature>
<feature type="repeat" description="AXPX 2" evidence="3">
    <location>
        <begin position="8"/>
        <end position="11"/>
    </location>
</feature>
<feature type="repeat" description="AXPX 3" evidence="3">
    <location>
        <begin position="12"/>
        <end position="15"/>
    </location>
</feature>
<feature type="repeat" description="AXPX 4" evidence="3">
    <location>
        <begin position="18"/>
        <end position="21"/>
    </location>
</feature>
<feature type="modified residue" description="Leucine amide" evidence="1">
    <location>
        <position position="36"/>
    </location>
</feature>
<feature type="sequence variant" evidence="4">
    <original>L</original>
    <variation>I</variation>
    <location>
        <position position="36"/>
    </location>
</feature>
<feature type="mutagenesis site" description="In MpVT3; no or moderate increase (2 to 4-fold) in antimicrobial activity." evidence="1">
    <original>K</original>
    <variation>A</variation>
    <location>
        <position position="34"/>
    </location>
</feature>
<feature type="mutagenesis site" description="In MpVT1; important increase (4 to 8-fold) in antimicrobial activity." evidence="1">
    <original>L</original>
    <variation>F</variation>
    <location>
        <position position="35"/>
    </location>
</feature>
<feature type="non-terminal residue" evidence="4">
    <location>
        <position position="1"/>
    </location>
</feature>
<name>MAST_VESTR</name>
<comment type="function">
    <text evidence="1">Antimicrobial peptide with potent activity against both Gram-positive (S.aureus MIC=50 ug/ml, and B.subtilis MIC=25 ug/ml) and Gram-negative bacteria (P.aeruginosa MIC=25 ug/ml, E.coli MIC=3-50 ug/ml, K.pneumoniae MIC=25 ug/ml). Exhibits little hemolytic activity on human erythrocytes.</text>
</comment>
<comment type="subcellular location">
    <subcellularLocation>
        <location evidence="1">Secreted</location>
    </subcellularLocation>
    <subcellularLocation>
        <location evidence="4">Target cell membrane</location>
    </subcellularLocation>
    <text evidence="4">Forms amphipathic alpha-helical conformations under membrane-mimetic conditions.</text>
</comment>
<comment type="tissue specificity">
    <text evidence="4">Expressed by the venom gland.</text>
</comment>
<comment type="similarity">
    <text evidence="3">Belongs to the MCD family. Mastoparan subfamily.</text>
</comment>
<keyword id="KW-0027">Amidation</keyword>
<keyword id="KW-0044">Antibiotic</keyword>
<keyword id="KW-0929">Antimicrobial</keyword>
<keyword id="KW-0903">Direct protein sequencing</keyword>
<keyword id="KW-0391">Immunity</keyword>
<keyword id="KW-0399">Innate immunity</keyword>
<keyword id="KW-0472">Membrane</keyword>
<keyword id="KW-0677">Repeat</keyword>
<keyword id="KW-0964">Secreted</keyword>
<keyword id="KW-1052">Target cell membrane</keyword>
<keyword id="KW-1053">Target membrane</keyword>
<sequence>EALADPIADPVAGPNPEADPEAINLKAIAAFAKKLLG</sequence>
<proteinExistence type="evidence at protein level"/>
<organism>
    <name type="scientific">Vespa tropica</name>
    <name type="common">Greater banded hornet</name>
    <name type="synonym">Sphex tropica</name>
    <dbReference type="NCBI Taxonomy" id="7450"/>
    <lineage>
        <taxon>Eukaryota</taxon>
        <taxon>Metazoa</taxon>
        <taxon>Ecdysozoa</taxon>
        <taxon>Arthropoda</taxon>
        <taxon>Hexapoda</taxon>
        <taxon>Insecta</taxon>
        <taxon>Pterygota</taxon>
        <taxon>Neoptera</taxon>
        <taxon>Endopterygota</taxon>
        <taxon>Hymenoptera</taxon>
        <taxon>Apocrita</taxon>
        <taxon>Aculeata</taxon>
        <taxon>Vespoidea</taxon>
        <taxon>Vespidae</taxon>
        <taxon>Vespinae</taxon>
        <taxon>Vespa</taxon>
    </lineage>
</organism>
<evidence type="ECO:0000269" key="1">
    <source>
    </source>
</evidence>
<evidence type="ECO:0000303" key="2">
    <source>
    </source>
</evidence>
<evidence type="ECO:0000305" key="3"/>
<evidence type="ECO:0000305" key="4">
    <source>
    </source>
</evidence>
<protein>
    <recommendedName>
        <fullName evidence="2">Mastoparan-VT</fullName>
        <shortName evidence="2">MpVT</shortName>
    </recommendedName>
    <alternativeName>
        <fullName evidence="3">Mastoparan-T</fullName>
    </alternativeName>
</protein>
<reference key="1">
    <citation type="journal article" date="2022" name="Molecules">
        <title>In silico and in vitro structure-activity relationship of mastoparan and its analogs.</title>
        <authorList>
            <person name="Rungsa P."/>
            <person name="Peigneur S."/>
            <person name="Jangpromma N."/>
            <person name="Klaynongsruang S."/>
            <person name="Tytgat J."/>
            <person name="Daduang S."/>
        </authorList>
    </citation>
    <scope>NUCLEOTIDE SEQUENCE [MRNA]</scope>
    <scope>PROTEIN SEQUENCE OF 23-36</scope>
    <scope>FUNCTION</scope>
    <scope>AMIDATION AT LEU-36</scope>
    <scope>SUBCELLULAR LOCATION</scope>
    <scope>SYNTHESIS OF 23-36</scope>
    <scope>MUTAGENESIS OF LYS-34 AND LEU-35</scope>
    <source>
        <tissue>Venom</tissue>
        <tissue>Venom gland</tissue>
    </source>
</reference>
<accession>P0C1Q7</accession>